<name>GCH4_DICT6</name>
<gene>
    <name evidence="1" type="primary">folE2</name>
    <name type="ordered locus">DICTH_0460</name>
</gene>
<organism>
    <name type="scientific">Dictyoglomus thermophilum (strain ATCC 35947 / DSM 3960 / H-6-12)</name>
    <dbReference type="NCBI Taxonomy" id="309799"/>
    <lineage>
        <taxon>Bacteria</taxon>
        <taxon>Pseudomonadati</taxon>
        <taxon>Dictyoglomota</taxon>
        <taxon>Dictyoglomia</taxon>
        <taxon>Dictyoglomales</taxon>
        <taxon>Dictyoglomaceae</taxon>
        <taxon>Dictyoglomus</taxon>
    </lineage>
</organism>
<accession>B5YCT4</accession>
<reference key="1">
    <citation type="journal article" date="2014" name="Genome Announc.">
        <title>Complete Genome Sequence of the Extreme Thermophile Dictyoglomus thermophilum H-6-12.</title>
        <authorList>
            <person name="Coil D.A."/>
            <person name="Badger J.H."/>
            <person name="Forberger H.C."/>
            <person name="Riggs F."/>
            <person name="Madupu R."/>
            <person name="Fedorova N."/>
            <person name="Ward N."/>
            <person name="Robb F.T."/>
            <person name="Eisen J.A."/>
        </authorList>
    </citation>
    <scope>NUCLEOTIDE SEQUENCE [LARGE SCALE GENOMIC DNA]</scope>
    <source>
        <strain>ATCC 35947 / DSM 3960 / H-6-12</strain>
    </source>
</reference>
<feature type="chain" id="PRO_1000215388" description="GTP cyclohydrolase FolE2">
    <location>
        <begin position="1"/>
        <end position="257"/>
    </location>
</feature>
<feature type="site" description="May be catalytically important" evidence="1">
    <location>
        <position position="143"/>
    </location>
</feature>
<sequence length="257" mass="29584">MRDVQNEKDYRGIYLRKVGIKNIHWPIKIVTKSGDYQSTVASIDISVDLREDLRGTHMSRFVEVLNGIDSLHPENLGKILQEVREKLRADSSHIKISFPYFIFKKAPVSQISSPNMVECVIDAELSKKLDMIIGVKVPIHTLCPCSKEISEYGAHNQRGVAEIYVRSKKLIWFEDLVEISEKSASAPIYSLLKRPDEKYITEMAYNNPKFVEDVVRDIVSELEKEPKISWYRVEVTSFESIHNHNAFACVEKGWVKK</sequence>
<keyword id="KW-0378">Hydrolase</keyword>
<comment type="function">
    <text evidence="1">Converts GTP to 7,8-dihydroneopterin triphosphate.</text>
</comment>
<comment type="catalytic activity">
    <reaction evidence="1">
        <text>GTP + H2O = 7,8-dihydroneopterin 3'-triphosphate + formate + H(+)</text>
        <dbReference type="Rhea" id="RHEA:17473"/>
        <dbReference type="ChEBI" id="CHEBI:15377"/>
        <dbReference type="ChEBI" id="CHEBI:15378"/>
        <dbReference type="ChEBI" id="CHEBI:15740"/>
        <dbReference type="ChEBI" id="CHEBI:37565"/>
        <dbReference type="ChEBI" id="CHEBI:58462"/>
        <dbReference type="EC" id="3.5.4.16"/>
    </reaction>
</comment>
<comment type="pathway">
    <text evidence="1">Cofactor biosynthesis; 7,8-dihydroneopterin triphosphate biosynthesis; 7,8-dihydroneopterin triphosphate from GTP: step 1/1.</text>
</comment>
<comment type="similarity">
    <text evidence="1">Belongs to the GTP cyclohydrolase IV family.</text>
</comment>
<protein>
    <recommendedName>
        <fullName evidence="1">GTP cyclohydrolase FolE2</fullName>
        <ecNumber evidence="1">3.5.4.16</ecNumber>
    </recommendedName>
</protein>
<proteinExistence type="inferred from homology"/>
<dbReference type="EC" id="3.5.4.16" evidence="1"/>
<dbReference type="EMBL" id="CP001146">
    <property type="protein sequence ID" value="ACI18288.1"/>
    <property type="molecule type" value="Genomic_DNA"/>
</dbReference>
<dbReference type="RefSeq" id="WP_012546920.1">
    <property type="nucleotide sequence ID" value="NC_011297.1"/>
</dbReference>
<dbReference type="SMR" id="B5YCT4"/>
<dbReference type="STRING" id="309799.DICTH_0460"/>
<dbReference type="PaxDb" id="309799-DICTH_0460"/>
<dbReference type="KEGG" id="dth:DICTH_0460"/>
<dbReference type="eggNOG" id="COG1469">
    <property type="taxonomic scope" value="Bacteria"/>
</dbReference>
<dbReference type="HOGENOM" id="CLU_062816_1_1_0"/>
<dbReference type="OrthoDB" id="9774824at2"/>
<dbReference type="UniPathway" id="UPA00848">
    <property type="reaction ID" value="UER00151"/>
</dbReference>
<dbReference type="Proteomes" id="UP000001733">
    <property type="component" value="Chromosome"/>
</dbReference>
<dbReference type="GO" id="GO:0003934">
    <property type="term" value="F:GTP cyclohydrolase I activity"/>
    <property type="evidence" value="ECO:0007669"/>
    <property type="project" value="UniProtKB-UniRule"/>
</dbReference>
<dbReference type="GO" id="GO:0046654">
    <property type="term" value="P:tetrahydrofolate biosynthetic process"/>
    <property type="evidence" value="ECO:0007669"/>
    <property type="project" value="UniProtKB-UniRule"/>
</dbReference>
<dbReference type="Gene3D" id="3.10.270.10">
    <property type="entry name" value="Urate Oxidase"/>
    <property type="match status" value="1"/>
</dbReference>
<dbReference type="HAMAP" id="MF_01527_B">
    <property type="entry name" value="GTP_cyclohydrol_B"/>
    <property type="match status" value="1"/>
</dbReference>
<dbReference type="InterPro" id="IPR022838">
    <property type="entry name" value="GTP_cyclohydrolase_FolE2"/>
</dbReference>
<dbReference type="InterPro" id="IPR003801">
    <property type="entry name" value="GTP_cyclohydrolase_FolE2/MptA"/>
</dbReference>
<dbReference type="NCBIfam" id="NF010200">
    <property type="entry name" value="PRK13674.1-1"/>
    <property type="match status" value="1"/>
</dbReference>
<dbReference type="PANTHER" id="PTHR36445">
    <property type="entry name" value="GTP CYCLOHYDROLASE MPTA"/>
    <property type="match status" value="1"/>
</dbReference>
<dbReference type="PANTHER" id="PTHR36445:SF1">
    <property type="entry name" value="GTP CYCLOHYDROLASE MPTA"/>
    <property type="match status" value="1"/>
</dbReference>
<dbReference type="Pfam" id="PF02649">
    <property type="entry name" value="GCHY-1"/>
    <property type="match status" value="1"/>
</dbReference>
<evidence type="ECO:0000255" key="1">
    <source>
        <dbReference type="HAMAP-Rule" id="MF_01527"/>
    </source>
</evidence>